<sequence>MIETIVEQDFNRLFEIEQAAHLVPWSKGTLLNNQGAKYLNLKYTEQDNIIAFAICQTLLDEATLFNLAVDPAFQAQGYAKKLLTALINQLQARGISTLWLEVRQSNTIAQKLYDSVGFNQITIRKNYYPMPDGSRENAVIMALYL</sequence>
<organism>
    <name type="scientific">Haemophilus ducreyi (strain 35000HP / ATCC 700724)</name>
    <dbReference type="NCBI Taxonomy" id="233412"/>
    <lineage>
        <taxon>Bacteria</taxon>
        <taxon>Pseudomonadati</taxon>
        <taxon>Pseudomonadota</taxon>
        <taxon>Gammaproteobacteria</taxon>
        <taxon>Pasteurellales</taxon>
        <taxon>Pasteurellaceae</taxon>
        <taxon>Haemophilus</taxon>
    </lineage>
</organism>
<evidence type="ECO:0000255" key="1">
    <source>
        <dbReference type="HAMAP-Rule" id="MF_02210"/>
    </source>
</evidence>
<evidence type="ECO:0000305" key="2"/>
<name>RIMI_HAEDU</name>
<proteinExistence type="inferred from homology"/>
<accession>Q7VP85</accession>
<dbReference type="EC" id="2.3.1.266" evidence="1"/>
<dbReference type="EMBL" id="AE017143">
    <property type="protein sequence ID" value="AAP95202.1"/>
    <property type="molecule type" value="Genomic_DNA"/>
</dbReference>
<dbReference type="RefSeq" id="WP_010944255.1">
    <property type="nucleotide sequence ID" value="NC_002940.2"/>
</dbReference>
<dbReference type="SMR" id="Q7VP85"/>
<dbReference type="STRING" id="233412.HD_0212"/>
<dbReference type="GeneID" id="60733329"/>
<dbReference type="KEGG" id="hdu:HD_0212"/>
<dbReference type="eggNOG" id="COG0456">
    <property type="taxonomic scope" value="Bacteria"/>
</dbReference>
<dbReference type="HOGENOM" id="CLU_013985_23_2_6"/>
<dbReference type="OrthoDB" id="9796919at2"/>
<dbReference type="Proteomes" id="UP000001022">
    <property type="component" value="Chromosome"/>
</dbReference>
<dbReference type="GO" id="GO:0005737">
    <property type="term" value="C:cytoplasm"/>
    <property type="evidence" value="ECO:0007669"/>
    <property type="project" value="UniProtKB-SubCell"/>
</dbReference>
<dbReference type="GO" id="GO:0008999">
    <property type="term" value="F:protein-N-terminal-alanine acetyltransferase activity"/>
    <property type="evidence" value="ECO:0007669"/>
    <property type="project" value="UniProtKB-UniRule"/>
</dbReference>
<dbReference type="CDD" id="cd04301">
    <property type="entry name" value="NAT_SF"/>
    <property type="match status" value="1"/>
</dbReference>
<dbReference type="Gene3D" id="3.40.630.30">
    <property type="match status" value="1"/>
</dbReference>
<dbReference type="HAMAP" id="MF_02210">
    <property type="entry name" value="RimI"/>
    <property type="match status" value="1"/>
</dbReference>
<dbReference type="InterPro" id="IPR006464">
    <property type="entry name" value="AcTrfase_RimI/Ard1"/>
</dbReference>
<dbReference type="InterPro" id="IPR016181">
    <property type="entry name" value="Acyl_CoA_acyltransferase"/>
</dbReference>
<dbReference type="InterPro" id="IPR000182">
    <property type="entry name" value="GNAT_dom"/>
</dbReference>
<dbReference type="InterPro" id="IPR043690">
    <property type="entry name" value="RimI"/>
</dbReference>
<dbReference type="InterPro" id="IPR050680">
    <property type="entry name" value="YpeA/RimI_acetyltransf"/>
</dbReference>
<dbReference type="NCBIfam" id="NF007025">
    <property type="entry name" value="PRK09491.1"/>
    <property type="match status" value="1"/>
</dbReference>
<dbReference type="NCBIfam" id="TIGR01575">
    <property type="entry name" value="rimI"/>
    <property type="match status" value="1"/>
</dbReference>
<dbReference type="PANTHER" id="PTHR43420">
    <property type="entry name" value="ACETYLTRANSFERASE"/>
    <property type="match status" value="1"/>
</dbReference>
<dbReference type="PANTHER" id="PTHR43420:SF44">
    <property type="entry name" value="ACETYLTRANSFERASE YPEA"/>
    <property type="match status" value="1"/>
</dbReference>
<dbReference type="Pfam" id="PF00583">
    <property type="entry name" value="Acetyltransf_1"/>
    <property type="match status" value="1"/>
</dbReference>
<dbReference type="SUPFAM" id="SSF55729">
    <property type="entry name" value="Acyl-CoA N-acyltransferases (Nat)"/>
    <property type="match status" value="1"/>
</dbReference>
<dbReference type="PROSITE" id="PS51186">
    <property type="entry name" value="GNAT"/>
    <property type="match status" value="1"/>
</dbReference>
<reference key="1">
    <citation type="submission" date="2003-06" db="EMBL/GenBank/DDBJ databases">
        <title>The complete genome sequence of Haemophilus ducreyi.</title>
        <authorList>
            <person name="Munson R.S. Jr."/>
            <person name="Ray W.C."/>
            <person name="Mahairas G."/>
            <person name="Sabo P."/>
            <person name="Mungur R."/>
            <person name="Johnson L."/>
            <person name="Nguyen D."/>
            <person name="Wang J."/>
            <person name="Forst C."/>
            <person name="Hood L."/>
        </authorList>
    </citation>
    <scope>NUCLEOTIDE SEQUENCE [LARGE SCALE GENOMIC DNA]</scope>
    <source>
        <strain>35000HP / ATCC 700724</strain>
    </source>
</reference>
<keyword id="KW-0012">Acyltransferase</keyword>
<keyword id="KW-0963">Cytoplasm</keyword>
<keyword id="KW-1185">Reference proteome</keyword>
<keyword id="KW-0808">Transferase</keyword>
<comment type="function">
    <text evidence="1">Acetylates the N-terminal alanine of ribosomal protein bS18.</text>
</comment>
<comment type="catalytic activity">
    <reaction evidence="1">
        <text>N-terminal L-alanyl-[ribosomal protein bS18] + acetyl-CoA = N-terminal N(alpha)-acetyl-L-alanyl-[ribosomal protein bS18] + CoA + H(+)</text>
        <dbReference type="Rhea" id="RHEA:43756"/>
        <dbReference type="Rhea" id="RHEA-COMP:10676"/>
        <dbReference type="Rhea" id="RHEA-COMP:10677"/>
        <dbReference type="ChEBI" id="CHEBI:15378"/>
        <dbReference type="ChEBI" id="CHEBI:57287"/>
        <dbReference type="ChEBI" id="CHEBI:57288"/>
        <dbReference type="ChEBI" id="CHEBI:64718"/>
        <dbReference type="ChEBI" id="CHEBI:83683"/>
        <dbReference type="EC" id="2.3.1.266"/>
    </reaction>
</comment>
<comment type="subcellular location">
    <subcellularLocation>
        <location evidence="1">Cytoplasm</location>
    </subcellularLocation>
</comment>
<comment type="similarity">
    <text evidence="1 2">Belongs to the acetyltransferase family. RimI subfamily.</text>
</comment>
<gene>
    <name evidence="1" type="primary">rimI</name>
    <name type="ordered locus">HD_0212</name>
</gene>
<feature type="chain" id="PRO_0000074564" description="[Ribosomal protein bS18]-alanine N-acetyltransferase">
    <location>
        <begin position="1"/>
        <end position="145"/>
    </location>
</feature>
<feature type="domain" description="N-acetyltransferase" evidence="1">
    <location>
        <begin position="1"/>
        <end position="145"/>
    </location>
</feature>
<feature type="active site" description="Proton acceptor" evidence="1">
    <location>
        <position position="101"/>
    </location>
</feature>
<feature type="active site" description="Proton donor" evidence="1">
    <location>
        <position position="113"/>
    </location>
</feature>
<feature type="binding site" evidence="1">
    <location>
        <begin position="67"/>
        <end position="69"/>
    </location>
    <ligand>
        <name>acetyl-CoA</name>
        <dbReference type="ChEBI" id="CHEBI:57288"/>
    </ligand>
</feature>
<feature type="binding site" evidence="1">
    <location>
        <position position="106"/>
    </location>
    <ligand>
        <name>acetyl-CoA</name>
        <dbReference type="ChEBI" id="CHEBI:57288"/>
    </ligand>
</feature>
<protein>
    <recommendedName>
        <fullName evidence="1">[Ribosomal protein bS18]-alanine N-acetyltransferase</fullName>
        <ecNumber evidence="1">2.3.1.266</ecNumber>
    </recommendedName>
</protein>